<organism>
    <name type="scientific">Mesorhizobium japonicum (strain LMG 29417 / CECT 9101 / MAFF 303099)</name>
    <name type="common">Mesorhizobium loti (strain MAFF 303099)</name>
    <dbReference type="NCBI Taxonomy" id="266835"/>
    <lineage>
        <taxon>Bacteria</taxon>
        <taxon>Pseudomonadati</taxon>
        <taxon>Pseudomonadota</taxon>
        <taxon>Alphaproteobacteria</taxon>
        <taxon>Hyphomicrobiales</taxon>
        <taxon>Phyllobacteriaceae</taxon>
        <taxon>Mesorhizobium</taxon>
    </lineage>
</organism>
<comment type="function">
    <text evidence="1">Catalyzes the phosphorylation of the position 2 hydroxy group of 4-diphosphocytidyl-2C-methyl-D-erythritol.</text>
</comment>
<comment type="catalytic activity">
    <reaction evidence="1">
        <text>4-CDP-2-C-methyl-D-erythritol + ATP = 4-CDP-2-C-methyl-D-erythritol 2-phosphate + ADP + H(+)</text>
        <dbReference type="Rhea" id="RHEA:18437"/>
        <dbReference type="ChEBI" id="CHEBI:15378"/>
        <dbReference type="ChEBI" id="CHEBI:30616"/>
        <dbReference type="ChEBI" id="CHEBI:57823"/>
        <dbReference type="ChEBI" id="CHEBI:57919"/>
        <dbReference type="ChEBI" id="CHEBI:456216"/>
        <dbReference type="EC" id="2.7.1.148"/>
    </reaction>
</comment>
<comment type="pathway">
    <text evidence="1">Isoprenoid biosynthesis; isopentenyl diphosphate biosynthesis via DXP pathway; isopentenyl diphosphate from 1-deoxy-D-xylulose 5-phosphate: step 3/6.</text>
</comment>
<comment type="similarity">
    <text evidence="1">Belongs to the GHMP kinase family. IspE subfamily.</text>
</comment>
<reference key="1">
    <citation type="journal article" date="2000" name="DNA Res.">
        <title>Complete genome structure of the nitrogen-fixing symbiotic bacterium Mesorhizobium loti.</title>
        <authorList>
            <person name="Kaneko T."/>
            <person name="Nakamura Y."/>
            <person name="Sato S."/>
            <person name="Asamizu E."/>
            <person name="Kato T."/>
            <person name="Sasamoto S."/>
            <person name="Watanabe A."/>
            <person name="Idesawa K."/>
            <person name="Ishikawa A."/>
            <person name="Kawashima K."/>
            <person name="Kimura T."/>
            <person name="Kishida Y."/>
            <person name="Kiyokawa C."/>
            <person name="Kohara M."/>
            <person name="Matsumoto M."/>
            <person name="Matsuno A."/>
            <person name="Mochizuki Y."/>
            <person name="Nakayama S."/>
            <person name="Nakazaki N."/>
            <person name="Shimpo S."/>
            <person name="Sugimoto M."/>
            <person name="Takeuchi C."/>
            <person name="Yamada M."/>
            <person name="Tabata S."/>
        </authorList>
    </citation>
    <scope>NUCLEOTIDE SEQUENCE [LARGE SCALE GENOMIC DNA]</scope>
    <source>
        <strain>LMG 29417 / CECT 9101 / MAFF 303099</strain>
    </source>
</reference>
<gene>
    <name evidence="1" type="primary">ispE</name>
    <name type="ordered locus">mll7422</name>
</gene>
<evidence type="ECO:0000255" key="1">
    <source>
        <dbReference type="HAMAP-Rule" id="MF_00061"/>
    </source>
</evidence>
<accession>Q986C6</accession>
<keyword id="KW-0067">ATP-binding</keyword>
<keyword id="KW-0414">Isoprene biosynthesis</keyword>
<keyword id="KW-0418">Kinase</keyword>
<keyword id="KW-0547">Nucleotide-binding</keyword>
<keyword id="KW-0808">Transferase</keyword>
<dbReference type="EC" id="2.7.1.148" evidence="1"/>
<dbReference type="EMBL" id="BA000012">
    <property type="protein sequence ID" value="BAB53527.1"/>
    <property type="molecule type" value="Genomic_DNA"/>
</dbReference>
<dbReference type="RefSeq" id="WP_010914834.1">
    <property type="nucleotide sequence ID" value="NC_002678.2"/>
</dbReference>
<dbReference type="SMR" id="Q986C6"/>
<dbReference type="KEGG" id="mlo:mll7422"/>
<dbReference type="PATRIC" id="fig|266835.9.peg.5925"/>
<dbReference type="eggNOG" id="COG1947">
    <property type="taxonomic scope" value="Bacteria"/>
</dbReference>
<dbReference type="HOGENOM" id="CLU_053057_1_0_5"/>
<dbReference type="UniPathway" id="UPA00056">
    <property type="reaction ID" value="UER00094"/>
</dbReference>
<dbReference type="Proteomes" id="UP000000552">
    <property type="component" value="Chromosome"/>
</dbReference>
<dbReference type="GO" id="GO:0050515">
    <property type="term" value="F:4-(cytidine 5'-diphospho)-2-C-methyl-D-erythritol kinase activity"/>
    <property type="evidence" value="ECO:0007669"/>
    <property type="project" value="UniProtKB-UniRule"/>
</dbReference>
<dbReference type="GO" id="GO:0005524">
    <property type="term" value="F:ATP binding"/>
    <property type="evidence" value="ECO:0007669"/>
    <property type="project" value="UniProtKB-UniRule"/>
</dbReference>
<dbReference type="GO" id="GO:0019288">
    <property type="term" value="P:isopentenyl diphosphate biosynthetic process, methylerythritol 4-phosphate pathway"/>
    <property type="evidence" value="ECO:0007669"/>
    <property type="project" value="UniProtKB-UniRule"/>
</dbReference>
<dbReference type="GO" id="GO:0016114">
    <property type="term" value="P:terpenoid biosynthetic process"/>
    <property type="evidence" value="ECO:0007669"/>
    <property type="project" value="InterPro"/>
</dbReference>
<dbReference type="Gene3D" id="3.30.230.10">
    <property type="match status" value="1"/>
</dbReference>
<dbReference type="Gene3D" id="3.30.70.890">
    <property type="entry name" value="GHMP kinase, C-terminal domain"/>
    <property type="match status" value="1"/>
</dbReference>
<dbReference type="HAMAP" id="MF_00061">
    <property type="entry name" value="IspE"/>
    <property type="match status" value="1"/>
</dbReference>
<dbReference type="InterPro" id="IPR013750">
    <property type="entry name" value="GHMP_kinase_C_dom"/>
</dbReference>
<dbReference type="InterPro" id="IPR036554">
    <property type="entry name" value="GHMP_kinase_C_sf"/>
</dbReference>
<dbReference type="InterPro" id="IPR006204">
    <property type="entry name" value="GHMP_kinase_N_dom"/>
</dbReference>
<dbReference type="InterPro" id="IPR004424">
    <property type="entry name" value="IspE"/>
</dbReference>
<dbReference type="InterPro" id="IPR020568">
    <property type="entry name" value="Ribosomal_Su5_D2-typ_SF"/>
</dbReference>
<dbReference type="InterPro" id="IPR014721">
    <property type="entry name" value="Ribsml_uS5_D2-typ_fold_subgr"/>
</dbReference>
<dbReference type="NCBIfam" id="TIGR00154">
    <property type="entry name" value="ispE"/>
    <property type="match status" value="1"/>
</dbReference>
<dbReference type="NCBIfam" id="NF011202">
    <property type="entry name" value="PRK14608.1"/>
    <property type="match status" value="1"/>
</dbReference>
<dbReference type="PANTHER" id="PTHR43527">
    <property type="entry name" value="4-DIPHOSPHOCYTIDYL-2-C-METHYL-D-ERYTHRITOL KINASE, CHLOROPLASTIC"/>
    <property type="match status" value="1"/>
</dbReference>
<dbReference type="PANTHER" id="PTHR43527:SF2">
    <property type="entry name" value="4-DIPHOSPHOCYTIDYL-2-C-METHYL-D-ERYTHRITOL KINASE, CHLOROPLASTIC"/>
    <property type="match status" value="1"/>
</dbReference>
<dbReference type="Pfam" id="PF08544">
    <property type="entry name" value="GHMP_kinases_C"/>
    <property type="match status" value="1"/>
</dbReference>
<dbReference type="Pfam" id="PF00288">
    <property type="entry name" value="GHMP_kinases_N"/>
    <property type="match status" value="1"/>
</dbReference>
<dbReference type="PIRSF" id="PIRSF010376">
    <property type="entry name" value="IspE"/>
    <property type="match status" value="1"/>
</dbReference>
<dbReference type="SUPFAM" id="SSF55060">
    <property type="entry name" value="GHMP Kinase, C-terminal domain"/>
    <property type="match status" value="1"/>
</dbReference>
<dbReference type="SUPFAM" id="SSF54211">
    <property type="entry name" value="Ribosomal protein S5 domain 2-like"/>
    <property type="match status" value="1"/>
</dbReference>
<feature type="chain" id="PRO_0000189253" description="4-diphosphocytidyl-2-C-methyl-D-erythritol kinase">
    <location>
        <begin position="1"/>
        <end position="295"/>
    </location>
</feature>
<feature type="active site" evidence="1">
    <location>
        <position position="15"/>
    </location>
</feature>
<feature type="active site" evidence="1">
    <location>
        <position position="144"/>
    </location>
</feature>
<feature type="binding site" evidence="1">
    <location>
        <begin position="102"/>
        <end position="112"/>
    </location>
    <ligand>
        <name>ATP</name>
        <dbReference type="ChEBI" id="CHEBI:30616"/>
    </ligand>
</feature>
<proteinExistence type="inferred from homology"/>
<protein>
    <recommendedName>
        <fullName evidence="1">4-diphosphocytidyl-2-C-methyl-D-erythritol kinase</fullName>
        <shortName evidence="1">CMK</shortName>
        <ecNumber evidence="1">2.7.1.148</ecNumber>
    </recommendedName>
    <alternativeName>
        <fullName evidence="1">4-(cytidine-5'-diphospho)-2-C-methyl-D-erythritol kinase</fullName>
    </alternativeName>
</protein>
<sequence length="295" mass="31132">MDTDIGSRTWHAHAKINLALHVTGRRADGYHLIDSLAVFTRFGDRVEIALADSDDFTVSGRYAPAVPLDAGNLVLKARDALRREAGSGRTPPVSIKLEKNLPIASGVGGGSSDAAAVLRGLAQTWALDIDDAGLARIGLSLGADVPMCLAAKPLVARGIGDELSMVPDFSALGLVLVNPGTPVSTADVFAALSRRDNEPLPPLPRSIDFHSLRNWLEVTRNDLEPAALALQPAIGRALSWLNKAGSGFSRMSGSGATCFGLFETGNVAKRAAAEIRSRQPDWFVAATRSMSSEAE</sequence>
<name>ISPE_RHILO</name>